<evidence type="ECO:0000250" key="1"/>
<evidence type="ECO:0000250" key="2">
    <source>
        <dbReference type="UniProtKB" id="Q8BVM4"/>
    </source>
</evidence>
<evidence type="ECO:0000250" key="3">
    <source>
        <dbReference type="UniProtKB" id="Q96A70"/>
    </source>
</evidence>
<evidence type="ECO:0000269" key="4">
    <source>
    </source>
</evidence>
<evidence type="ECO:0000305" key="5"/>
<comment type="function">
    <text evidence="2 3">Antizyme inhibitor (AZI) protein that positively regulates ornithine decarboxylase (ODC) activity and polyamine uptake. AZI is an enzymatically inactive ODC homolog that counteracts the negative effect of ODC antizymes (AZs) OAZ1, OAZ2 and OAZ3 on ODC activity by competing with ODC for antizyme-binding. Inhibits antizyme-dependent ODC degradation and releases ODC monomers from their inactive complex with antizymes, leading to formation of the catalytically active ODC homodimer and restoring polyamine production. Participates in the morphological integrity of the trans-Golgi network (TGN) and functions as a regulator of intracellular secretory vesicle trafficking.</text>
</comment>
<comment type="subunit">
    <text evidence="2 3">Monomer. Interacts with OAZ1, OAZ2 and OAZ3; this interaction disrupts the interaction between the antizyme and ODC1. Does not form a heterodimer with ODC1.</text>
</comment>
<comment type="subcellular location">
    <subcellularLocation>
        <location evidence="4">Nucleus</location>
    </subcellularLocation>
    <subcellularLocation>
        <location evidence="1">Cytoplasm</location>
    </subcellularLocation>
    <subcellularLocation>
        <location evidence="1">Cytoplasm</location>
        <location evidence="1">Perinuclear region</location>
    </subcellularLocation>
    <subcellularLocation>
        <location evidence="1">Membrane</location>
    </subcellularLocation>
    <subcellularLocation>
        <location evidence="1">Cytoplasmic vesicle</location>
    </subcellularLocation>
    <subcellularLocation>
        <location evidence="1">Endoplasmic reticulum-Golgi intermediate compartment</location>
    </subcellularLocation>
    <subcellularLocation>
        <location evidence="1">Golgi apparatus</location>
        <location evidence="1">cis-Golgi network</location>
    </subcellularLocation>
    <subcellularLocation>
        <location evidence="1">Golgi apparatus</location>
        <location evidence="1">trans-Golgi network</location>
    </subcellularLocation>
    <subcellularLocation>
        <location evidence="4">Cytoplasmic granule</location>
    </subcellularLocation>
    <subcellularLocation>
        <location evidence="1">Cell projection</location>
        <location evidence="1">Axon</location>
    </subcellularLocation>
    <subcellularLocation>
        <location evidence="1">Cell projection</location>
        <location evidence="1">Dendrite</location>
    </subcellularLocation>
    <subcellularLocation>
        <location evidence="1">Perikaryon</location>
    </subcellularLocation>
    <text evidence="1">Colocalizes with KDEL receptors in ER-Golgi intermediate compartment (ERGIC). Translocates from the ERGIC structure to the cytoplasm in a antizyme-dependent manner. Localizes with vesicle-associated membrane protein VAMP8 in the vicinity of the plasma membrane within serotonin-containing secretory granules. Detected as vesicle-like pattern in neurite outgrowths. Localizes to the vesicular compartments of the secretory pathway, predominantly in the trans-Golgi network (TGN) (By similarity). Localizes with vesicle-associated membrane protein VAMP8 in the vicinity of the plasma membrane within serotonin-containing secretory granules.</text>
</comment>
<comment type="induction">
    <text evidence="4">Up-regulated in activated mast cells (MC) (at protein level).</text>
</comment>
<comment type="domain">
    <text evidence="1">The N-terminus domain is necessary for its localization to the ER-Golgi intermediate compartment (ERGIC).</text>
</comment>
<comment type="PTM">
    <text evidence="1">Ubiquitinated, leading to its proteasomal degradation; a process that is reduced in presence of antizymes. May also be degraded through the lysosomal degradative pathway in a proteasomal-independent manner (By similarity).</text>
</comment>
<comment type="miscellaneous">
    <text evidence="5">Arg-68 is present instead of the conserved Lys which would otherwise be the covalent pyridoxal phosphate binding site.</text>
</comment>
<comment type="similarity">
    <text evidence="5">Belongs to the Orn/Lys/Arg decarboxylase class-II family. ODC antizyme inhibitor subfamily.</text>
</comment>
<comment type="caution">
    <text evidence="5">Human ortholog was initially reported to have ornithine decarboxylase or arginine decarboxylase activities, but it was later found that the mouse ortholog does not possess neither of them.</text>
</comment>
<keyword id="KW-0966">Cell projection</keyword>
<keyword id="KW-0963">Cytoplasm</keyword>
<keyword id="KW-0968">Cytoplasmic vesicle</keyword>
<keyword id="KW-0333">Golgi apparatus</keyword>
<keyword id="KW-0472">Membrane</keyword>
<keyword id="KW-0539">Nucleus</keyword>
<keyword id="KW-1185">Reference proteome</keyword>
<keyword id="KW-0813">Transport</keyword>
<keyword id="KW-0832">Ubl conjugation</keyword>
<organism>
    <name type="scientific">Rattus norvegicus</name>
    <name type="common">Rat</name>
    <dbReference type="NCBI Taxonomy" id="10116"/>
    <lineage>
        <taxon>Eukaryota</taxon>
        <taxon>Metazoa</taxon>
        <taxon>Chordata</taxon>
        <taxon>Craniata</taxon>
        <taxon>Vertebrata</taxon>
        <taxon>Euteleostomi</taxon>
        <taxon>Mammalia</taxon>
        <taxon>Eutheria</taxon>
        <taxon>Euarchontoglires</taxon>
        <taxon>Glires</taxon>
        <taxon>Rodentia</taxon>
        <taxon>Myomorpha</taxon>
        <taxon>Muroidea</taxon>
        <taxon>Muridae</taxon>
        <taxon>Murinae</taxon>
        <taxon>Rattus</taxon>
    </lineage>
</organism>
<reference key="1">
    <citation type="journal article" date="2004" name="Nature">
        <title>Genome sequence of the Brown Norway rat yields insights into mammalian evolution.</title>
        <authorList>
            <person name="Gibbs R.A."/>
            <person name="Weinstock G.M."/>
            <person name="Metzker M.L."/>
            <person name="Muzny D.M."/>
            <person name="Sodergren E.J."/>
            <person name="Scherer S."/>
            <person name="Scott G."/>
            <person name="Steffen D."/>
            <person name="Worley K.C."/>
            <person name="Burch P.E."/>
            <person name="Okwuonu G."/>
            <person name="Hines S."/>
            <person name="Lewis L."/>
            <person name="Deramo C."/>
            <person name="Delgado O."/>
            <person name="Dugan-Rocha S."/>
            <person name="Miner G."/>
            <person name="Morgan M."/>
            <person name="Hawes A."/>
            <person name="Gill R."/>
            <person name="Holt R.A."/>
            <person name="Adams M.D."/>
            <person name="Amanatides P.G."/>
            <person name="Baden-Tillson H."/>
            <person name="Barnstead M."/>
            <person name="Chin S."/>
            <person name="Evans C.A."/>
            <person name="Ferriera S."/>
            <person name="Fosler C."/>
            <person name="Glodek A."/>
            <person name="Gu Z."/>
            <person name="Jennings D."/>
            <person name="Kraft C.L."/>
            <person name="Nguyen T."/>
            <person name="Pfannkoch C.M."/>
            <person name="Sitter C."/>
            <person name="Sutton G.G."/>
            <person name="Venter J.C."/>
            <person name="Woodage T."/>
            <person name="Smith D."/>
            <person name="Lee H.-M."/>
            <person name="Gustafson E."/>
            <person name="Cahill P."/>
            <person name="Kana A."/>
            <person name="Doucette-Stamm L."/>
            <person name="Weinstock K."/>
            <person name="Fechtel K."/>
            <person name="Weiss R.B."/>
            <person name="Dunn D.M."/>
            <person name="Green E.D."/>
            <person name="Blakesley R.W."/>
            <person name="Bouffard G.G."/>
            <person name="De Jong P.J."/>
            <person name="Osoegawa K."/>
            <person name="Zhu B."/>
            <person name="Marra M."/>
            <person name="Schein J."/>
            <person name="Bosdet I."/>
            <person name="Fjell C."/>
            <person name="Jones S."/>
            <person name="Krzywinski M."/>
            <person name="Mathewson C."/>
            <person name="Siddiqui A."/>
            <person name="Wye N."/>
            <person name="McPherson J."/>
            <person name="Zhao S."/>
            <person name="Fraser C.M."/>
            <person name="Shetty J."/>
            <person name="Shatsman S."/>
            <person name="Geer K."/>
            <person name="Chen Y."/>
            <person name="Abramzon S."/>
            <person name="Nierman W.C."/>
            <person name="Havlak P.H."/>
            <person name="Chen R."/>
            <person name="Durbin K.J."/>
            <person name="Egan A."/>
            <person name="Ren Y."/>
            <person name="Song X.-Z."/>
            <person name="Li B."/>
            <person name="Liu Y."/>
            <person name="Qin X."/>
            <person name="Cawley S."/>
            <person name="Cooney A.J."/>
            <person name="D'Souza L.M."/>
            <person name="Martin K."/>
            <person name="Wu J.Q."/>
            <person name="Gonzalez-Garay M.L."/>
            <person name="Jackson A.R."/>
            <person name="Kalafus K.J."/>
            <person name="McLeod M.P."/>
            <person name="Milosavljevic A."/>
            <person name="Virk D."/>
            <person name="Volkov A."/>
            <person name="Wheeler D.A."/>
            <person name="Zhang Z."/>
            <person name="Bailey J.A."/>
            <person name="Eichler E.E."/>
            <person name="Tuzun E."/>
            <person name="Birney E."/>
            <person name="Mongin E."/>
            <person name="Ureta-Vidal A."/>
            <person name="Woodwark C."/>
            <person name="Zdobnov E."/>
            <person name="Bork P."/>
            <person name="Suyama M."/>
            <person name="Torrents D."/>
            <person name="Alexandersson M."/>
            <person name="Trask B.J."/>
            <person name="Young J.M."/>
            <person name="Huang H."/>
            <person name="Wang H."/>
            <person name="Xing H."/>
            <person name="Daniels S."/>
            <person name="Gietzen D."/>
            <person name="Schmidt J."/>
            <person name="Stevens K."/>
            <person name="Vitt U."/>
            <person name="Wingrove J."/>
            <person name="Camara F."/>
            <person name="Mar Alba M."/>
            <person name="Abril J.F."/>
            <person name="Guigo R."/>
            <person name="Smit A."/>
            <person name="Dubchak I."/>
            <person name="Rubin E.M."/>
            <person name="Couronne O."/>
            <person name="Poliakov A."/>
            <person name="Huebner N."/>
            <person name="Ganten D."/>
            <person name="Goesele C."/>
            <person name="Hummel O."/>
            <person name="Kreitler T."/>
            <person name="Lee Y.-A."/>
            <person name="Monti J."/>
            <person name="Schulz H."/>
            <person name="Zimdahl H."/>
            <person name="Himmelbauer H."/>
            <person name="Lehrach H."/>
            <person name="Jacob H.J."/>
            <person name="Bromberg S."/>
            <person name="Gullings-Handley J."/>
            <person name="Jensen-Seaman M.I."/>
            <person name="Kwitek A.E."/>
            <person name="Lazar J."/>
            <person name="Pasko D."/>
            <person name="Tonellato P.J."/>
            <person name="Twigger S."/>
            <person name="Ponting C.P."/>
            <person name="Duarte J.M."/>
            <person name="Rice S."/>
            <person name="Goodstadt L."/>
            <person name="Beatson S.A."/>
            <person name="Emes R.D."/>
            <person name="Winter E.E."/>
            <person name="Webber C."/>
            <person name="Brandt P."/>
            <person name="Nyakatura G."/>
            <person name="Adetobi M."/>
            <person name="Chiaromonte F."/>
            <person name="Elnitski L."/>
            <person name="Eswara P."/>
            <person name="Hardison R.C."/>
            <person name="Hou M."/>
            <person name="Kolbe D."/>
            <person name="Makova K."/>
            <person name="Miller W."/>
            <person name="Nekrutenko A."/>
            <person name="Riemer C."/>
            <person name="Schwartz S."/>
            <person name="Taylor J."/>
            <person name="Yang S."/>
            <person name="Zhang Y."/>
            <person name="Lindpaintner K."/>
            <person name="Andrews T.D."/>
            <person name="Caccamo M."/>
            <person name="Clamp M."/>
            <person name="Clarke L."/>
            <person name="Curwen V."/>
            <person name="Durbin R.M."/>
            <person name="Eyras E."/>
            <person name="Searle S.M."/>
            <person name="Cooper G.M."/>
            <person name="Batzoglou S."/>
            <person name="Brudno M."/>
            <person name="Sidow A."/>
            <person name="Stone E.A."/>
            <person name="Payseur B.A."/>
            <person name="Bourque G."/>
            <person name="Lopez-Otin C."/>
            <person name="Puente X.S."/>
            <person name="Chakrabarti K."/>
            <person name="Chatterji S."/>
            <person name="Dewey C."/>
            <person name="Pachter L."/>
            <person name="Bray N."/>
            <person name="Yap V.B."/>
            <person name="Caspi A."/>
            <person name="Tesler G."/>
            <person name="Pevzner P.A."/>
            <person name="Haussler D."/>
            <person name="Roskin K.M."/>
            <person name="Baertsch R."/>
            <person name="Clawson H."/>
            <person name="Furey T.S."/>
            <person name="Hinrichs A.S."/>
            <person name="Karolchik D."/>
            <person name="Kent W.J."/>
            <person name="Rosenbloom K.R."/>
            <person name="Trumbower H."/>
            <person name="Weirauch M."/>
            <person name="Cooper D.N."/>
            <person name="Stenson P.D."/>
            <person name="Ma B."/>
            <person name="Brent M."/>
            <person name="Arumugam M."/>
            <person name="Shteynberg D."/>
            <person name="Copley R.R."/>
            <person name="Taylor M.S."/>
            <person name="Riethman H."/>
            <person name="Mudunuri U."/>
            <person name="Peterson J."/>
            <person name="Guyer M."/>
            <person name="Felsenfeld A."/>
            <person name="Old S."/>
            <person name="Mockrin S."/>
            <person name="Collins F.S."/>
        </authorList>
    </citation>
    <scope>NUCLEOTIDE SEQUENCE [LARGE SCALE GENOMIC DNA]</scope>
    <source>
        <strain>Brown Norway</strain>
    </source>
</reference>
<reference key="2">
    <citation type="journal article" date="2009" name="PLoS ONE">
        <title>Expression of antizyme inhibitor 2 in mast cells and role of polyamines as selective regulators of serotonin secretion.</title>
        <authorList>
            <person name="Kanerva K."/>
            <person name="Lappalainen J."/>
            <person name="Makitie L.T."/>
            <person name="Virolainen S."/>
            <person name="Kovanen P.T."/>
            <person name="Andersson L.C."/>
        </authorList>
    </citation>
    <scope>SUBCELLULAR LOCATION</scope>
    <scope>INDUCTION</scope>
</reference>
<sequence>MAGYLSESDFVMVEEGFSTRDLLEELTLGASQATTGKVAAFFVADAVVRKHFCFLKYLPRVRPFYAVRCNSSLGVLKVLAELGLGFSCASKAEMELVQHIGVPASKIICANPCKQVAQIKYAAKHGVRLLSFDNEVELAKVVKSHPSAKSWGEVLTLDALGLHHTHRRVGCSLMFQASVIASVAQGYLELVCQPFHIGSGCPDPQAYAQSIADARLVFQMGAELGHTMNILDLGGGFPGLEGAKVRFEEVTSVIGKNIPFYTPPPCHVPLRTHATKKMTSSDFCCRVHVTAKEKPLFSPFLTEQTGAAPKSIVYHLDEGVYGVFNSVLFDNTCPTPALQKKPSADQPLYSSSLWGPAVDGCDCVAEGLWLPQLQVGDWLVFDNMGAYTVDTKSLLGGTQACRVTYAMSRLAWEALQGQLLPAEEDQDAEGVCKPLSCGWEITDSLCVGPVFTPASIM</sequence>
<accession>D4A693</accession>
<gene>
    <name type="primary">Azin2</name>
    <name type="synonym">Adc</name>
    <name type="synonym">Odcp</name>
</gene>
<dbReference type="EMBL" id="AABR06040008">
    <property type="status" value="NOT_ANNOTATED_CDS"/>
    <property type="molecule type" value="Genomic_DNA"/>
</dbReference>
<dbReference type="EMBL" id="AABR06040009">
    <property type="status" value="NOT_ANNOTATED_CDS"/>
    <property type="molecule type" value="Genomic_DNA"/>
</dbReference>
<dbReference type="EMBL" id="AABR06040010">
    <property type="status" value="NOT_ANNOTATED_CDS"/>
    <property type="molecule type" value="Genomic_DNA"/>
</dbReference>
<dbReference type="EMBL" id="AABR06040011">
    <property type="status" value="NOT_ANNOTATED_CDS"/>
    <property type="molecule type" value="Genomic_DNA"/>
</dbReference>
<dbReference type="SMR" id="D4A693"/>
<dbReference type="FunCoup" id="D4A693">
    <property type="interactions" value="96"/>
</dbReference>
<dbReference type="STRING" id="10116.ENSRNOP00000072209"/>
<dbReference type="GlyGen" id="D4A693">
    <property type="glycosylation" value="1 site"/>
</dbReference>
<dbReference type="PhosphoSitePlus" id="D4A693"/>
<dbReference type="PaxDb" id="10116-ENSRNOP00000059346"/>
<dbReference type="AGR" id="RGD:1564776"/>
<dbReference type="RGD" id="1564776">
    <property type="gene designation" value="Azin2"/>
</dbReference>
<dbReference type="eggNOG" id="KOG0622">
    <property type="taxonomic scope" value="Eukaryota"/>
</dbReference>
<dbReference type="InParanoid" id="D4A693"/>
<dbReference type="Reactome" id="R-RNO-351143">
    <property type="pathway name" value="Agmatine biosynthesis"/>
</dbReference>
<dbReference type="PRO" id="PR:D4A693"/>
<dbReference type="Proteomes" id="UP000002494">
    <property type="component" value="Unplaced"/>
</dbReference>
<dbReference type="GO" id="GO:0030424">
    <property type="term" value="C:axon"/>
    <property type="evidence" value="ECO:0000250"/>
    <property type="project" value="UniProtKB"/>
</dbReference>
<dbReference type="GO" id="GO:0005801">
    <property type="term" value="C:cis-Golgi network"/>
    <property type="evidence" value="ECO:0000250"/>
    <property type="project" value="UniProtKB"/>
</dbReference>
<dbReference type="GO" id="GO:0005737">
    <property type="term" value="C:cytoplasm"/>
    <property type="evidence" value="ECO:0000318"/>
    <property type="project" value="GO_Central"/>
</dbReference>
<dbReference type="GO" id="GO:0031410">
    <property type="term" value="C:cytoplasmic vesicle"/>
    <property type="evidence" value="ECO:0000250"/>
    <property type="project" value="UniProtKB"/>
</dbReference>
<dbReference type="GO" id="GO:0030425">
    <property type="term" value="C:dendrite"/>
    <property type="evidence" value="ECO:0000250"/>
    <property type="project" value="UniProtKB"/>
</dbReference>
<dbReference type="GO" id="GO:0033116">
    <property type="term" value="C:endoplasmic reticulum-Golgi intermediate compartment membrane"/>
    <property type="evidence" value="ECO:0000250"/>
    <property type="project" value="UniProtKB"/>
</dbReference>
<dbReference type="GO" id="GO:1990005">
    <property type="term" value="C:granular vesicle"/>
    <property type="evidence" value="ECO:0000314"/>
    <property type="project" value="UniProtKB"/>
</dbReference>
<dbReference type="GO" id="GO:0005739">
    <property type="term" value="C:mitochondrion"/>
    <property type="evidence" value="ECO:0000266"/>
    <property type="project" value="RGD"/>
</dbReference>
<dbReference type="GO" id="GO:0005634">
    <property type="term" value="C:nucleus"/>
    <property type="evidence" value="ECO:0000314"/>
    <property type="project" value="UniProtKB"/>
</dbReference>
<dbReference type="GO" id="GO:0043204">
    <property type="term" value="C:perikaryon"/>
    <property type="evidence" value="ECO:0000250"/>
    <property type="project" value="UniProtKB"/>
</dbReference>
<dbReference type="GO" id="GO:0048471">
    <property type="term" value="C:perinuclear region of cytoplasm"/>
    <property type="evidence" value="ECO:0000250"/>
    <property type="project" value="UniProtKB"/>
</dbReference>
<dbReference type="GO" id="GO:0005802">
    <property type="term" value="C:trans-Golgi network"/>
    <property type="evidence" value="ECO:0000250"/>
    <property type="project" value="UniProtKB"/>
</dbReference>
<dbReference type="GO" id="GO:0030133">
    <property type="term" value="C:transport vesicle"/>
    <property type="evidence" value="ECO:0000250"/>
    <property type="project" value="UniProtKB"/>
</dbReference>
<dbReference type="GO" id="GO:0003824">
    <property type="term" value="F:catalytic activity"/>
    <property type="evidence" value="ECO:0007669"/>
    <property type="project" value="InterPro"/>
</dbReference>
<dbReference type="GO" id="GO:0042978">
    <property type="term" value="F:ornithine decarboxylase activator activity"/>
    <property type="evidence" value="ECO:0000250"/>
    <property type="project" value="UniProtKB"/>
</dbReference>
<dbReference type="GO" id="GO:0042177">
    <property type="term" value="P:negative regulation of protein catabolic process"/>
    <property type="evidence" value="ECO:0000250"/>
    <property type="project" value="UniProtKB"/>
</dbReference>
<dbReference type="GO" id="GO:0006591">
    <property type="term" value="P:ornithine metabolic process"/>
    <property type="evidence" value="ECO:0000266"/>
    <property type="project" value="RGD"/>
</dbReference>
<dbReference type="GO" id="GO:0043085">
    <property type="term" value="P:positive regulation of catalytic activity"/>
    <property type="evidence" value="ECO:0000250"/>
    <property type="project" value="UniProtKB"/>
</dbReference>
<dbReference type="GO" id="GO:1902269">
    <property type="term" value="P:positive regulation of polyamine transmembrane transport"/>
    <property type="evidence" value="ECO:0000250"/>
    <property type="project" value="UniProtKB"/>
</dbReference>
<dbReference type="GO" id="GO:0033387">
    <property type="term" value="P:putrescine biosynthetic process from arginine, via ornithine"/>
    <property type="evidence" value="ECO:0000318"/>
    <property type="project" value="GO_Central"/>
</dbReference>
<dbReference type="GO" id="GO:0098629">
    <property type="term" value="P:trans-Golgi network membrane organization"/>
    <property type="evidence" value="ECO:0000250"/>
    <property type="project" value="UniProtKB"/>
</dbReference>
<dbReference type="CDD" id="cd00622">
    <property type="entry name" value="PLPDE_III_ODC"/>
    <property type="match status" value="1"/>
</dbReference>
<dbReference type="FunFam" id="2.40.37.10:FF:000009">
    <property type="entry name" value="antizyme inhibitor 2 isoform X1"/>
    <property type="match status" value="1"/>
</dbReference>
<dbReference type="Gene3D" id="3.20.20.10">
    <property type="entry name" value="Alanine racemase"/>
    <property type="match status" value="1"/>
</dbReference>
<dbReference type="Gene3D" id="2.40.37.10">
    <property type="entry name" value="Lyase, Ornithine Decarboxylase, Chain A, domain 1"/>
    <property type="match status" value="1"/>
</dbReference>
<dbReference type="InterPro" id="IPR009006">
    <property type="entry name" value="Ala_racemase/Decarboxylase_C"/>
</dbReference>
<dbReference type="InterPro" id="IPR022643">
    <property type="entry name" value="De-COase2_C"/>
</dbReference>
<dbReference type="InterPro" id="IPR022657">
    <property type="entry name" value="De-COase2_CS"/>
</dbReference>
<dbReference type="InterPro" id="IPR022644">
    <property type="entry name" value="De-COase2_N"/>
</dbReference>
<dbReference type="InterPro" id="IPR000183">
    <property type="entry name" value="Orn/DAP/Arg_de-COase"/>
</dbReference>
<dbReference type="InterPro" id="IPR002433">
    <property type="entry name" value="Orn_de-COase"/>
</dbReference>
<dbReference type="InterPro" id="IPR029066">
    <property type="entry name" value="PLP-binding_barrel"/>
</dbReference>
<dbReference type="PANTHER" id="PTHR11482:SF4">
    <property type="entry name" value="ANTIZYME INHIBITOR 2"/>
    <property type="match status" value="1"/>
</dbReference>
<dbReference type="PANTHER" id="PTHR11482">
    <property type="entry name" value="ARGININE/DIAMINOPIMELATE/ORNITHINE DECARBOXYLASE"/>
    <property type="match status" value="1"/>
</dbReference>
<dbReference type="Pfam" id="PF02784">
    <property type="entry name" value="Orn_Arg_deC_N"/>
    <property type="match status" value="1"/>
</dbReference>
<dbReference type="Pfam" id="PF00278">
    <property type="entry name" value="Orn_DAP_Arg_deC"/>
    <property type="match status" value="1"/>
</dbReference>
<dbReference type="PRINTS" id="PR01179">
    <property type="entry name" value="ODADCRBXLASE"/>
</dbReference>
<dbReference type="PRINTS" id="PR01182">
    <property type="entry name" value="ORNDCRBXLASE"/>
</dbReference>
<dbReference type="SUPFAM" id="SSF50621">
    <property type="entry name" value="Alanine racemase C-terminal domain-like"/>
    <property type="match status" value="1"/>
</dbReference>
<dbReference type="SUPFAM" id="SSF51419">
    <property type="entry name" value="PLP-binding barrel"/>
    <property type="match status" value="1"/>
</dbReference>
<dbReference type="PROSITE" id="PS00879">
    <property type="entry name" value="ODR_DC_2_2"/>
    <property type="match status" value="1"/>
</dbReference>
<feature type="chain" id="PRO_0000430358" description="Antizyme inhibitor 2">
    <location>
        <begin position="1"/>
        <end position="457"/>
    </location>
</feature>
<feature type="region of interest" description="Necessary for polyamine uptake stimulation" evidence="1">
    <location>
        <begin position="115"/>
        <end position="138"/>
    </location>
</feature>
<name>AZIN2_RAT</name>
<proteinExistence type="evidence at protein level"/>
<protein>
    <recommendedName>
        <fullName>Antizyme inhibitor 2</fullName>
        <shortName>AzI2</shortName>
    </recommendedName>
    <alternativeName>
        <fullName>Ornithine decarboxylase-like protein</fullName>
        <shortName>ODC-like protein</shortName>
    </alternativeName>
    <alternativeName>
        <fullName>ornithine decarboxylase paralog</fullName>
        <shortName>ODC-p</shortName>
    </alternativeName>
</protein>